<keyword id="KW-0143">Chaperone</keyword>
<keyword id="KW-0963">Cytoplasm</keyword>
<keyword id="KW-1185">Reference proteome</keyword>
<keyword id="KW-0690">Ribosome biogenesis</keyword>
<keyword id="KW-0698">rRNA processing</keyword>
<gene>
    <name evidence="1" type="primary">rimM</name>
    <name type="ordered locus">CHY_1431</name>
</gene>
<name>RIMM_CARHZ</name>
<sequence length="172" mass="20159">MNNLIAIGYVLGTFGIEGWVKVEPLTDHPQRFLNTERVFWEKEDEIFPLRIEEVQLQAERILVKFMEINDIKEANKLIFGYLKIPKNEIVQLKENEFYLFQLKGLTVYDLNYQKIGVVRTVLKNPANDLLVIDTIHDKELLLPFIKVFVKEVNLPEGFIKVELLPGMLEEKK</sequence>
<protein>
    <recommendedName>
        <fullName evidence="1">Ribosome maturation factor RimM</fullName>
    </recommendedName>
</protein>
<accession>Q3AC71</accession>
<comment type="function">
    <text evidence="1">An accessory protein needed during the final step in the assembly of 30S ribosomal subunit, possibly for assembly of the head region. Essential for efficient processing of 16S rRNA. May be needed both before and after RbfA during the maturation of 16S rRNA. It has affinity for free ribosomal 30S subunits but not for 70S ribosomes.</text>
</comment>
<comment type="subunit">
    <text evidence="1">Binds ribosomal protein uS19.</text>
</comment>
<comment type="subcellular location">
    <subcellularLocation>
        <location evidence="1">Cytoplasm</location>
    </subcellularLocation>
</comment>
<comment type="domain">
    <text evidence="1">The PRC barrel domain binds ribosomal protein uS19.</text>
</comment>
<comment type="similarity">
    <text evidence="1">Belongs to the RimM family.</text>
</comment>
<dbReference type="EMBL" id="CP000141">
    <property type="protein sequence ID" value="ABB15808.1"/>
    <property type="molecule type" value="Genomic_DNA"/>
</dbReference>
<dbReference type="RefSeq" id="WP_011344338.1">
    <property type="nucleotide sequence ID" value="NC_007503.1"/>
</dbReference>
<dbReference type="SMR" id="Q3AC71"/>
<dbReference type="FunCoup" id="Q3AC71">
    <property type="interactions" value="355"/>
</dbReference>
<dbReference type="STRING" id="246194.CHY_1431"/>
<dbReference type="KEGG" id="chy:CHY_1431"/>
<dbReference type="eggNOG" id="COG0806">
    <property type="taxonomic scope" value="Bacteria"/>
</dbReference>
<dbReference type="HOGENOM" id="CLU_077636_3_2_9"/>
<dbReference type="InParanoid" id="Q3AC71"/>
<dbReference type="OrthoDB" id="9810331at2"/>
<dbReference type="Proteomes" id="UP000002706">
    <property type="component" value="Chromosome"/>
</dbReference>
<dbReference type="GO" id="GO:0005737">
    <property type="term" value="C:cytoplasm"/>
    <property type="evidence" value="ECO:0007669"/>
    <property type="project" value="UniProtKB-SubCell"/>
</dbReference>
<dbReference type="GO" id="GO:0005840">
    <property type="term" value="C:ribosome"/>
    <property type="evidence" value="ECO:0007669"/>
    <property type="project" value="InterPro"/>
</dbReference>
<dbReference type="GO" id="GO:0043022">
    <property type="term" value="F:ribosome binding"/>
    <property type="evidence" value="ECO:0007669"/>
    <property type="project" value="InterPro"/>
</dbReference>
<dbReference type="GO" id="GO:0042274">
    <property type="term" value="P:ribosomal small subunit biogenesis"/>
    <property type="evidence" value="ECO:0007669"/>
    <property type="project" value="UniProtKB-UniRule"/>
</dbReference>
<dbReference type="GO" id="GO:0006364">
    <property type="term" value="P:rRNA processing"/>
    <property type="evidence" value="ECO:0007669"/>
    <property type="project" value="UniProtKB-UniRule"/>
</dbReference>
<dbReference type="Gene3D" id="2.30.30.240">
    <property type="entry name" value="PRC-barrel domain"/>
    <property type="match status" value="1"/>
</dbReference>
<dbReference type="Gene3D" id="2.40.30.60">
    <property type="entry name" value="RimM"/>
    <property type="match status" value="1"/>
</dbReference>
<dbReference type="HAMAP" id="MF_00014">
    <property type="entry name" value="Ribosome_mat_RimM"/>
    <property type="match status" value="1"/>
</dbReference>
<dbReference type="InterPro" id="IPR011033">
    <property type="entry name" value="PRC_barrel-like_sf"/>
</dbReference>
<dbReference type="InterPro" id="IPR056792">
    <property type="entry name" value="PRC_RimM"/>
</dbReference>
<dbReference type="InterPro" id="IPR011961">
    <property type="entry name" value="RimM"/>
</dbReference>
<dbReference type="InterPro" id="IPR002676">
    <property type="entry name" value="RimM_N"/>
</dbReference>
<dbReference type="InterPro" id="IPR036976">
    <property type="entry name" value="RimM_N_sf"/>
</dbReference>
<dbReference type="InterPro" id="IPR009000">
    <property type="entry name" value="Transl_B-barrel_sf"/>
</dbReference>
<dbReference type="NCBIfam" id="TIGR02273">
    <property type="entry name" value="16S_RimM"/>
    <property type="match status" value="1"/>
</dbReference>
<dbReference type="PANTHER" id="PTHR33692">
    <property type="entry name" value="RIBOSOME MATURATION FACTOR RIMM"/>
    <property type="match status" value="1"/>
</dbReference>
<dbReference type="PANTHER" id="PTHR33692:SF1">
    <property type="entry name" value="RIBOSOME MATURATION FACTOR RIMM"/>
    <property type="match status" value="1"/>
</dbReference>
<dbReference type="Pfam" id="PF24986">
    <property type="entry name" value="PRC_RimM"/>
    <property type="match status" value="1"/>
</dbReference>
<dbReference type="Pfam" id="PF01782">
    <property type="entry name" value="RimM"/>
    <property type="match status" value="1"/>
</dbReference>
<dbReference type="SUPFAM" id="SSF50346">
    <property type="entry name" value="PRC-barrel domain"/>
    <property type="match status" value="1"/>
</dbReference>
<dbReference type="SUPFAM" id="SSF50447">
    <property type="entry name" value="Translation proteins"/>
    <property type="match status" value="1"/>
</dbReference>
<organism>
    <name type="scientific">Carboxydothermus hydrogenoformans (strain ATCC BAA-161 / DSM 6008 / Z-2901)</name>
    <dbReference type="NCBI Taxonomy" id="246194"/>
    <lineage>
        <taxon>Bacteria</taxon>
        <taxon>Bacillati</taxon>
        <taxon>Bacillota</taxon>
        <taxon>Clostridia</taxon>
        <taxon>Thermoanaerobacterales</taxon>
        <taxon>Thermoanaerobacteraceae</taxon>
        <taxon>Carboxydothermus</taxon>
    </lineage>
</organism>
<feature type="chain" id="PRO_0000244119" description="Ribosome maturation factor RimM">
    <location>
        <begin position="1"/>
        <end position="172"/>
    </location>
</feature>
<feature type="domain" description="PRC barrel" evidence="1">
    <location>
        <begin position="94"/>
        <end position="167"/>
    </location>
</feature>
<evidence type="ECO:0000255" key="1">
    <source>
        <dbReference type="HAMAP-Rule" id="MF_00014"/>
    </source>
</evidence>
<proteinExistence type="inferred from homology"/>
<reference key="1">
    <citation type="journal article" date="2005" name="PLoS Genet.">
        <title>Life in hot carbon monoxide: the complete genome sequence of Carboxydothermus hydrogenoformans Z-2901.</title>
        <authorList>
            <person name="Wu M."/>
            <person name="Ren Q."/>
            <person name="Durkin A.S."/>
            <person name="Daugherty S.C."/>
            <person name="Brinkac L.M."/>
            <person name="Dodson R.J."/>
            <person name="Madupu R."/>
            <person name="Sullivan S.A."/>
            <person name="Kolonay J.F."/>
            <person name="Nelson W.C."/>
            <person name="Tallon L.J."/>
            <person name="Jones K.M."/>
            <person name="Ulrich L.E."/>
            <person name="Gonzalez J.M."/>
            <person name="Zhulin I.B."/>
            <person name="Robb F.T."/>
            <person name="Eisen J.A."/>
        </authorList>
    </citation>
    <scope>NUCLEOTIDE SEQUENCE [LARGE SCALE GENOMIC DNA]</scope>
    <source>
        <strain>ATCC BAA-161 / DSM 6008 / Z-2901</strain>
    </source>
</reference>